<organism>
    <name type="scientific">Enterobacteria phage H19B</name>
    <name type="common">Bacteriophage H19B</name>
    <dbReference type="NCBI Taxonomy" id="69932"/>
    <lineage>
        <taxon>Viruses</taxon>
        <taxon>Duplodnaviria</taxon>
        <taxon>Heunggongvirae</taxon>
        <taxon>Uroviricota</taxon>
        <taxon>Caudoviricetes</taxon>
        <taxon>Lambdavirus</taxon>
    </lineage>
</organism>
<gene>
    <name type="primary">ninG</name>
</gene>
<evidence type="ECO:0000256" key="1">
    <source>
        <dbReference type="SAM" id="MobiDB-lite"/>
    </source>
</evidence>
<evidence type="ECO:0000305" key="2"/>
<reference key="1">
    <citation type="journal article" date="1998" name="Mol. Microbiol.">
        <title>Functional and genetic analysis of regulatory regions of coliphage H-19B: location of shiga-like toxin and lysis genes suggest a role for phage functions in toxin release.</title>
        <authorList>
            <person name="Neely M.N."/>
            <person name="Friedman D.I."/>
        </authorList>
    </citation>
    <scope>NUCLEOTIDE SEQUENCE [GENOMIC DNA]</scope>
</reference>
<dbReference type="EMBL" id="AF034975">
    <property type="protein sequence ID" value="AAD04653.1"/>
    <property type="molecule type" value="Genomic_DNA"/>
</dbReference>
<dbReference type="SMR" id="O48427"/>
<dbReference type="InterPro" id="IPR008713">
    <property type="entry name" value="Phage_lambda_NinG"/>
</dbReference>
<dbReference type="Pfam" id="PF05766">
    <property type="entry name" value="NinG"/>
    <property type="match status" value="1"/>
</dbReference>
<proteinExistence type="inferred from homology"/>
<name>NING_BPH19</name>
<sequence length="201" mass="23668">MAKPARRKCKICKEWFHPAFSNQWWCSPEHGTKLALERRNKEREKAEKTAEKKRRREEQKQKDKIKIRKLALKPRSYWIKQAQQAVNAFIRERDRDLPCISSGTLTSAQWDAGHYRTTAAAPQLRFDERNIHKQCVVCNQHKSGNLVPYRVELINRIGQEAVDEIESNHNRHRWTIEECKAIKAGSNRKLKDLRNSRSEAA</sequence>
<feature type="chain" id="PRO_0000077631" description="Protein ninG">
    <location>
        <begin position="1"/>
        <end position="201"/>
    </location>
</feature>
<feature type="region of interest" description="Disordered" evidence="1">
    <location>
        <begin position="35"/>
        <end position="64"/>
    </location>
</feature>
<protein>
    <recommendedName>
        <fullName>Protein ninG</fullName>
    </recommendedName>
</protein>
<accession>O48427</accession>
<organismHost>
    <name type="scientific">Escherichia coli</name>
    <dbReference type="NCBI Taxonomy" id="562"/>
</organismHost>
<comment type="similarity">
    <text evidence="2">Belongs to the ninG family.</text>
</comment>